<dbReference type="EMBL" id="EU926001">
    <property type="protein sequence ID" value="ACI41333.1"/>
    <property type="molecule type" value="mRNA"/>
</dbReference>
<dbReference type="EMBL" id="FM864005">
    <property type="protein sequence ID" value="CAS03603.1"/>
    <property type="molecule type" value="mRNA"/>
</dbReference>
<dbReference type="SMR" id="B6DCR7"/>
<dbReference type="ArachnoServer" id="AS000950">
    <property type="toxin name" value="U3-lycotoxin-Ls1h"/>
</dbReference>
<dbReference type="GO" id="GO:0005576">
    <property type="term" value="C:extracellular region"/>
    <property type="evidence" value="ECO:0007669"/>
    <property type="project" value="UniProtKB-SubCell"/>
</dbReference>
<dbReference type="GO" id="GO:0090729">
    <property type="term" value="F:toxin activity"/>
    <property type="evidence" value="ECO:0007669"/>
    <property type="project" value="UniProtKB-KW"/>
</dbReference>
<dbReference type="InterPro" id="IPR019553">
    <property type="entry name" value="Spider_toxin_CSTX_knottin"/>
</dbReference>
<dbReference type="InterPro" id="IPR011142">
    <property type="entry name" value="Spider_toxin_CSTX_Knottin_CS"/>
</dbReference>
<dbReference type="Pfam" id="PF10530">
    <property type="entry name" value="Toxin_35"/>
    <property type="match status" value="1"/>
</dbReference>
<dbReference type="PROSITE" id="PS60029">
    <property type="entry name" value="SPIDER_CSTX"/>
    <property type="match status" value="1"/>
</dbReference>
<accession>B6DCR7</accession>
<proteinExistence type="evidence at transcript level"/>
<comment type="subcellular location">
    <subcellularLocation>
        <location evidence="1">Secreted</location>
    </subcellularLocation>
</comment>
<comment type="tissue specificity">
    <text>Expressed by the venom gland.</text>
</comment>
<comment type="domain">
    <text evidence="1">The presence of a 'disulfide through disulfide knot' structurally defines this protein as a knottin.</text>
</comment>
<comment type="similarity">
    <text evidence="3">Belongs to the neurotoxin 19 (CSTX) family. 01 subfamily.</text>
</comment>
<reference key="1">
    <citation type="journal article" date="2010" name="Zoology">
        <title>Transcriptome analysis of the venom glands of the Chinese wolf spider Lycosa singoriensis.</title>
        <authorList>
            <person name="Zhang Y."/>
            <person name="Chen J."/>
            <person name="Tang X."/>
            <person name="Wang F."/>
            <person name="Jiang L."/>
            <person name="Xiong X."/>
            <person name="Wang M."/>
            <person name="Rong M."/>
            <person name="Liu Z."/>
            <person name="Liang S."/>
        </authorList>
    </citation>
    <scope>NUCLEOTIDE SEQUENCE [LARGE SCALE MRNA]</scope>
    <source>
        <tissue>Venom gland</tissue>
    </source>
</reference>
<sequence length="115" mass="13346">MKFVLLFGVFLVTLFSYSSAEMLDDFDQADEDELLSLIEKEEARAKECTPRFYDCSHDRHSCCRSELFKDVCTCFYPEGGDNEVCTCQQPKHLKYMEKAADKAKKFGGKIKRWFG</sequence>
<keyword id="KW-1015">Disulfide bond</keyword>
<keyword id="KW-0960">Knottin</keyword>
<keyword id="KW-0964">Secreted</keyword>
<keyword id="KW-0732">Signal</keyword>
<keyword id="KW-0800">Toxin</keyword>
<evidence type="ECO:0000250" key="1"/>
<evidence type="ECO:0000255" key="2"/>
<evidence type="ECO:0000305" key="3"/>
<protein>
    <recommendedName>
        <fullName>U3-lycotoxin-Ls1h</fullName>
    </recommendedName>
    <alternativeName>
        <fullName>Toxin-like structure LSTX-B22</fullName>
    </alternativeName>
</protein>
<name>TX322_LYCSI</name>
<organism>
    <name type="scientific">Lycosa singoriensis</name>
    <name type="common">Wolf spider</name>
    <name type="synonym">Aranea singoriensis</name>
    <dbReference type="NCBI Taxonomy" id="434756"/>
    <lineage>
        <taxon>Eukaryota</taxon>
        <taxon>Metazoa</taxon>
        <taxon>Ecdysozoa</taxon>
        <taxon>Arthropoda</taxon>
        <taxon>Chelicerata</taxon>
        <taxon>Arachnida</taxon>
        <taxon>Araneae</taxon>
        <taxon>Araneomorphae</taxon>
        <taxon>Entelegynae</taxon>
        <taxon>Lycosoidea</taxon>
        <taxon>Lycosidae</taxon>
        <taxon>Lycosa</taxon>
    </lineage>
</organism>
<feature type="signal peptide" evidence="2">
    <location>
        <begin position="1"/>
        <end position="20"/>
    </location>
</feature>
<feature type="propeptide" id="PRO_0000401649" evidence="1">
    <location>
        <begin position="21"/>
        <end position="44"/>
    </location>
</feature>
<feature type="chain" id="PRO_0000401650" description="U3-lycotoxin-Ls1h">
    <location>
        <begin position="45"/>
        <end position="115"/>
    </location>
</feature>
<feature type="disulfide bond" evidence="1">
    <location>
        <begin position="48"/>
        <end position="63"/>
    </location>
</feature>
<feature type="disulfide bond" evidence="1">
    <location>
        <begin position="55"/>
        <end position="72"/>
    </location>
</feature>
<feature type="disulfide bond" evidence="1">
    <location>
        <begin position="62"/>
        <end position="87"/>
    </location>
</feature>
<feature type="disulfide bond" evidence="1">
    <location>
        <begin position="74"/>
        <end position="85"/>
    </location>
</feature>